<organism>
    <name type="scientific">Conus amadis</name>
    <name type="common">Amadis cone</name>
    <dbReference type="NCBI Taxonomy" id="198732"/>
    <lineage>
        <taxon>Eukaryota</taxon>
        <taxon>Metazoa</taxon>
        <taxon>Spiralia</taxon>
        <taxon>Lophotrochozoa</taxon>
        <taxon>Mollusca</taxon>
        <taxon>Gastropoda</taxon>
        <taxon>Caenogastropoda</taxon>
        <taxon>Neogastropoda</taxon>
        <taxon>Conoidea</taxon>
        <taxon>Conidae</taxon>
        <taxon>Conus</taxon>
        <taxon>Leptoconus</taxon>
    </lineage>
</organism>
<proteinExistence type="evidence at protein level"/>
<name>T1098_CONAA</name>
<dbReference type="GO" id="GO:0005576">
    <property type="term" value="C:extracellular region"/>
    <property type="evidence" value="ECO:0007669"/>
    <property type="project" value="UniProtKB-SubCell"/>
</dbReference>
<dbReference type="GO" id="GO:0099106">
    <property type="term" value="F:ion channel regulator activity"/>
    <property type="evidence" value="ECO:0007669"/>
    <property type="project" value="UniProtKB-KW"/>
</dbReference>
<dbReference type="GO" id="GO:0090729">
    <property type="term" value="F:toxin activity"/>
    <property type="evidence" value="ECO:0007669"/>
    <property type="project" value="UniProtKB-KW"/>
</dbReference>
<comment type="function">
    <text evidence="3">Probable toxin that inhibits ion channels.</text>
</comment>
<comment type="subcellular location">
    <subcellularLocation>
        <location evidence="1">Secreted</location>
    </subcellularLocation>
</comment>
<comment type="tissue specificity">
    <text evidence="4">Expressed by the venom duct.</text>
</comment>
<comment type="domain">
    <text evidence="3">The cysteine framework is V (CC-CC).</text>
</comment>
<comment type="PTM">
    <text evidence="3">Contains 2 disulfide bonds that can be either 'C1-C3, C2-C4' or 'C1-C4, C2-C3', since these disulfide connectivities have been observed for conotoxins with cysteine framework V (for examples, see AC P0DQQ7 and AC P81755).</text>
</comment>
<comment type="mass spectrometry" mass="1099.2" method="MALDI" evidence="1"/>
<keyword id="KW-0027">Amidation</keyword>
<keyword id="KW-0903">Direct protein sequencing</keyword>
<keyword id="KW-1015">Disulfide bond</keyword>
<keyword id="KW-0872">Ion channel impairing toxin</keyword>
<keyword id="KW-0964">Secreted</keyword>
<keyword id="KW-0800">Toxin</keyword>
<reference key="1">
    <citation type="journal article" date="2019" name="Protein Pept. Lett.">
        <title>Proteome based de novo sequencing of novel conotoxins from marine molluscivorous cone snail Conus amadis and neurological activities of its natural venom in zebrafish model.</title>
        <authorList>
            <person name="Rajesh R.P."/>
            <person name="Franklin J.B."/>
            <person name="Badsha I."/>
            <person name="Arjun P."/>
            <person name="Jain R.P."/>
            <person name="Vignesh M.S."/>
            <person name="Kannan R.R."/>
        </authorList>
    </citation>
    <scope>PROTEIN SEQUENCE</scope>
    <scope>SUBCELLULAR LOCATION</scope>
    <scope>MASS SPECTROMETRY</scope>
    <scope>AMIDATION AT CYS-9</scope>
    <source>
        <tissue>Venom</tissue>
    </source>
</reference>
<protein>
    <recommendedName>
        <fullName evidence="2">Conotoxin Am1099</fullName>
    </recommendedName>
</protein>
<accession>P0DUU1</accession>
<feature type="peptide" id="PRO_0000453580" description="Conotoxin Am1099" evidence="1">
    <location>
        <begin position="1"/>
        <end position="9"/>
    </location>
</feature>
<feature type="modified residue" description="Cysteine amide" evidence="1">
    <location>
        <position position="9"/>
    </location>
</feature>
<feature type="unsure residue" description="Q or K" evidence="4">
    <location>
        <position position="3"/>
    </location>
</feature>
<sequence length="9" mass="1104">CCQLFVWCC</sequence>
<evidence type="ECO:0000269" key="1">
    <source>
    </source>
</evidence>
<evidence type="ECO:0000303" key="2">
    <source>
    </source>
</evidence>
<evidence type="ECO:0000305" key="3"/>
<evidence type="ECO:0000305" key="4">
    <source>
    </source>
</evidence>